<gene>
    <name type="primary">SUN3</name>
    <name type="synonym">SUNC1</name>
</gene>
<feature type="chain" id="PRO_0000312220" description="SUN domain-containing protein 3">
    <location>
        <begin position="1"/>
        <end position="357"/>
    </location>
</feature>
<feature type="topological domain" description="Nuclear" evidence="7">
    <location>
        <begin position="1"/>
        <end position="47"/>
    </location>
</feature>
<feature type="transmembrane region" description="Helical" evidence="2">
    <location>
        <begin position="48"/>
        <end position="64"/>
    </location>
</feature>
<feature type="topological domain" description="Perinuclear space" evidence="7">
    <location>
        <begin position="65"/>
        <end position="357"/>
    </location>
</feature>
<feature type="domain" description="SUN" evidence="3">
    <location>
        <begin position="193"/>
        <end position="354"/>
    </location>
</feature>
<feature type="coiled-coil region" evidence="2">
    <location>
        <begin position="98"/>
        <end position="146"/>
    </location>
</feature>
<feature type="splice variant" id="VSP_029748" description="In isoform 2." evidence="6">
    <location>
        <begin position="1"/>
        <end position="100"/>
    </location>
</feature>
<feature type="splice variant" id="VSP_055624" description="In isoform 3." evidence="5">
    <original>SGKTKARRAAMFFRRCSEDASGSASGNALLSEDENPDANGVTRSWKIILSTMLTLTFLLV</original>
    <variation>EDYSKYNAYTDFSSCRLECSGAILAHCNLHLLGSSISPASASRVAGTT</variation>
    <location>
        <begin position="2"/>
        <end position="61"/>
    </location>
</feature>
<feature type="splice variant" id="VSP_029749" description="In isoform 2." evidence="6">
    <original>Y</original>
    <variation>YVQRYMCRFVIQA</variation>
    <location>
        <position position="287"/>
    </location>
</feature>
<feature type="sequence variant" id="VAR_037458" description="In dbSNP:rs17852360." evidence="4">
    <original>I</original>
    <variation>V</variation>
    <location>
        <position position="127"/>
    </location>
</feature>
<feature type="sequence variant" id="VAR_037459" description="In dbSNP:rs7797657.">
    <original>L</original>
    <variation>V</variation>
    <location>
        <position position="177"/>
    </location>
</feature>
<feature type="sequence conflict" description="In Ref. 1; AAP97300." evidence="7" ref="1">
    <location>
        <begin position="231"/>
        <end position="232"/>
    </location>
</feature>
<feature type="sequence conflict" description="In Ref. 2; BAG63413." evidence="7" ref="2">
    <original>K</original>
    <variation>R</variation>
    <location>
        <position position="292"/>
    </location>
</feature>
<dbReference type="EMBL" id="AF429967">
    <property type="protein sequence ID" value="AAP97300.1"/>
    <property type="status" value="ALT_FRAME"/>
    <property type="molecule type" value="mRNA"/>
</dbReference>
<dbReference type="EMBL" id="AK302011">
    <property type="protein sequence ID" value="BAG63413.1"/>
    <property type="molecule type" value="mRNA"/>
</dbReference>
<dbReference type="EMBL" id="DQ099386">
    <property type="protein sequence ID" value="AAZ13762.1"/>
    <property type="molecule type" value="mRNA"/>
</dbReference>
<dbReference type="EMBL" id="AC069279">
    <property type="status" value="NOT_ANNOTATED_CDS"/>
    <property type="molecule type" value="Genomic_DNA"/>
</dbReference>
<dbReference type="EMBL" id="CH236958">
    <property type="protein sequence ID" value="EAL23808.1"/>
    <property type="status" value="ALT_SEQ"/>
    <property type="molecule type" value="Genomic_DNA"/>
</dbReference>
<dbReference type="EMBL" id="CH471128">
    <property type="protein sequence ID" value="EAW60999.1"/>
    <property type="molecule type" value="Genomic_DNA"/>
</dbReference>
<dbReference type="EMBL" id="CH471128">
    <property type="protein sequence ID" value="EAW61000.1"/>
    <property type="molecule type" value="Genomic_DNA"/>
</dbReference>
<dbReference type="EMBL" id="BC026189">
    <property type="protein sequence ID" value="AAH26189.3"/>
    <property type="molecule type" value="mRNA"/>
</dbReference>
<dbReference type="CCDS" id="CCDS34636.1">
    <molecule id="Q8TAQ9-1"/>
</dbReference>
<dbReference type="CCDS" id="CCDS64647.1">
    <molecule id="Q8TAQ9-3"/>
</dbReference>
<dbReference type="RefSeq" id="NP_001025190.1">
    <molecule id="Q8TAQ9-1"/>
    <property type="nucleotide sequence ID" value="NM_001030019.2"/>
</dbReference>
<dbReference type="RefSeq" id="NP_001271279.1">
    <molecule id="Q8TAQ9-3"/>
    <property type="nucleotide sequence ID" value="NM_001284350.2"/>
</dbReference>
<dbReference type="RefSeq" id="NP_689995.3">
    <molecule id="Q8TAQ9-1"/>
    <property type="nucleotide sequence ID" value="NM_152782.3"/>
</dbReference>
<dbReference type="RefSeq" id="XP_016867419.1">
    <molecule id="Q8TAQ9-1"/>
    <property type="nucleotide sequence ID" value="XM_017011930.2"/>
</dbReference>
<dbReference type="RefSeq" id="XP_054213733.1">
    <molecule id="Q8TAQ9-1"/>
    <property type="nucleotide sequence ID" value="XM_054357758.1"/>
</dbReference>
<dbReference type="SMR" id="Q8TAQ9"/>
<dbReference type="BioGRID" id="129187">
    <property type="interactions" value="7"/>
</dbReference>
<dbReference type="FunCoup" id="Q8TAQ9">
    <property type="interactions" value="46"/>
</dbReference>
<dbReference type="IntAct" id="Q8TAQ9">
    <property type="interactions" value="6"/>
</dbReference>
<dbReference type="STRING" id="9606.ENSP00000297325"/>
<dbReference type="iPTMnet" id="Q8TAQ9"/>
<dbReference type="PhosphoSitePlus" id="Q8TAQ9"/>
<dbReference type="BioMuta" id="SUN3"/>
<dbReference type="DMDM" id="162416243"/>
<dbReference type="MassIVE" id="Q8TAQ9"/>
<dbReference type="PaxDb" id="9606-ENSP00000297325"/>
<dbReference type="PeptideAtlas" id="Q8TAQ9"/>
<dbReference type="ProteomicsDB" id="18821"/>
<dbReference type="ProteomicsDB" id="73909">
    <molecule id="Q8TAQ9-1"/>
</dbReference>
<dbReference type="ProteomicsDB" id="73910">
    <molecule id="Q8TAQ9-2"/>
</dbReference>
<dbReference type="Antibodypedia" id="1892">
    <property type="antibodies" value="43 antibodies from 15 providers"/>
</dbReference>
<dbReference type="DNASU" id="256979"/>
<dbReference type="Ensembl" id="ENST00000297325.9">
    <molecule id="Q8TAQ9-1"/>
    <property type="protein sequence ID" value="ENSP00000297325.4"/>
    <property type="gene ID" value="ENSG00000164744.14"/>
</dbReference>
<dbReference type="Ensembl" id="ENST00000395572.6">
    <molecule id="Q8TAQ9-1"/>
    <property type="protein sequence ID" value="ENSP00000378939.2"/>
    <property type="gene ID" value="ENSG00000164744.14"/>
</dbReference>
<dbReference type="Ensembl" id="ENST00000412142.5">
    <molecule id="Q8TAQ9-3"/>
    <property type="protein sequence ID" value="ENSP00000410204.2"/>
    <property type="gene ID" value="ENSG00000164744.14"/>
</dbReference>
<dbReference type="Ensembl" id="ENST00000438771.5">
    <molecule id="Q8TAQ9-2"/>
    <property type="protein sequence ID" value="ENSP00000409077.1"/>
    <property type="gene ID" value="ENSG00000164744.14"/>
</dbReference>
<dbReference type="GeneID" id="256979"/>
<dbReference type="KEGG" id="hsa:256979"/>
<dbReference type="MANE-Select" id="ENST00000297325.9">
    <property type="protein sequence ID" value="ENSP00000297325.4"/>
    <property type="RefSeq nucleotide sequence ID" value="NM_001030019.2"/>
    <property type="RefSeq protein sequence ID" value="NP_001025190.1"/>
</dbReference>
<dbReference type="UCSC" id="uc003tof.4">
    <molecule id="Q8TAQ9-1"/>
    <property type="organism name" value="human"/>
</dbReference>
<dbReference type="AGR" id="HGNC:22429"/>
<dbReference type="CTD" id="256979"/>
<dbReference type="GeneCards" id="SUN3"/>
<dbReference type="HGNC" id="HGNC:22429">
    <property type="gene designation" value="SUN3"/>
</dbReference>
<dbReference type="HPA" id="ENSG00000164744">
    <property type="expression patterns" value="Tissue enriched (testis)"/>
</dbReference>
<dbReference type="MIM" id="618984">
    <property type="type" value="gene"/>
</dbReference>
<dbReference type="neXtProt" id="NX_Q8TAQ9"/>
<dbReference type="OpenTargets" id="ENSG00000164744"/>
<dbReference type="PharmGKB" id="PA165618375"/>
<dbReference type="VEuPathDB" id="HostDB:ENSG00000164744"/>
<dbReference type="eggNOG" id="KOG2687">
    <property type="taxonomic scope" value="Eukaryota"/>
</dbReference>
<dbReference type="GeneTree" id="ENSGT00940000161393"/>
<dbReference type="HOGENOM" id="CLU_043737_0_0_1"/>
<dbReference type="InParanoid" id="Q8TAQ9"/>
<dbReference type="OMA" id="QGHILIR"/>
<dbReference type="OrthoDB" id="342281at2759"/>
<dbReference type="PAN-GO" id="Q8TAQ9">
    <property type="GO annotations" value="4 GO annotations based on evolutionary models"/>
</dbReference>
<dbReference type="PhylomeDB" id="Q8TAQ9"/>
<dbReference type="TreeFam" id="TF323915"/>
<dbReference type="PathwayCommons" id="Q8TAQ9"/>
<dbReference type="SignaLink" id="Q8TAQ9"/>
<dbReference type="SIGNOR" id="Q8TAQ9"/>
<dbReference type="BioGRID-ORCS" id="256979">
    <property type="hits" value="14 hits in 1152 CRISPR screens"/>
</dbReference>
<dbReference type="ChiTaRS" id="SUN3">
    <property type="organism name" value="human"/>
</dbReference>
<dbReference type="GenomeRNAi" id="256979"/>
<dbReference type="Pharos" id="Q8TAQ9">
    <property type="development level" value="Tdark"/>
</dbReference>
<dbReference type="PRO" id="PR:Q8TAQ9"/>
<dbReference type="Proteomes" id="UP000005640">
    <property type="component" value="Chromosome 7"/>
</dbReference>
<dbReference type="RNAct" id="Q8TAQ9">
    <property type="molecule type" value="protein"/>
</dbReference>
<dbReference type="Bgee" id="ENSG00000164744">
    <property type="expression patterns" value="Expressed in right testis and 110 other cell types or tissues"/>
</dbReference>
<dbReference type="ExpressionAtlas" id="Q8TAQ9">
    <property type="expression patterns" value="baseline and differential"/>
</dbReference>
<dbReference type="GO" id="GO:0034993">
    <property type="term" value="C:meiotic nuclear membrane microtubule tethering complex"/>
    <property type="evidence" value="ECO:0000318"/>
    <property type="project" value="GO_Central"/>
</dbReference>
<dbReference type="GO" id="GO:0005635">
    <property type="term" value="C:nuclear envelope"/>
    <property type="evidence" value="ECO:0000318"/>
    <property type="project" value="GO_Central"/>
</dbReference>
<dbReference type="GO" id="GO:0005637">
    <property type="term" value="C:nuclear inner membrane"/>
    <property type="evidence" value="ECO:0007669"/>
    <property type="project" value="UniProtKB-SubCell"/>
</dbReference>
<dbReference type="GO" id="GO:0043495">
    <property type="term" value="F:protein-membrane adaptor activity"/>
    <property type="evidence" value="ECO:0000318"/>
    <property type="project" value="GO_Central"/>
</dbReference>
<dbReference type="FunFam" id="2.60.120.260:FF:000074">
    <property type="entry name" value="Sad1 and UNC84 domain-containing 3"/>
    <property type="match status" value="1"/>
</dbReference>
<dbReference type="Gene3D" id="2.60.120.260">
    <property type="entry name" value="Galactose-binding domain-like"/>
    <property type="match status" value="1"/>
</dbReference>
<dbReference type="InterPro" id="IPR045119">
    <property type="entry name" value="SUN1-5"/>
</dbReference>
<dbReference type="InterPro" id="IPR012919">
    <property type="entry name" value="SUN_dom"/>
</dbReference>
<dbReference type="PANTHER" id="PTHR12911">
    <property type="entry name" value="SAD1/UNC-84-LIKE PROTEIN-RELATED"/>
    <property type="match status" value="1"/>
</dbReference>
<dbReference type="PANTHER" id="PTHR12911:SF24">
    <property type="entry name" value="SUN DOMAIN-CONTAINING PROTEIN 3"/>
    <property type="match status" value="1"/>
</dbReference>
<dbReference type="Pfam" id="PF07738">
    <property type="entry name" value="Sad1_UNC"/>
    <property type="match status" value="1"/>
</dbReference>
<dbReference type="PROSITE" id="PS51469">
    <property type="entry name" value="SUN"/>
    <property type="match status" value="1"/>
</dbReference>
<proteinExistence type="evidence at protein level"/>
<accession>Q8TAQ9</accession>
<accession>A4D2F3</accession>
<accession>B4DXK1</accession>
<accession>D3DVM3</accession>
<accession>E7EWC8</accession>
<accession>Q4F965</accession>
<accession>Q7Z4U8</accession>
<evidence type="ECO:0000250" key="1">
    <source>
        <dbReference type="UniProtKB" id="Q5SS91"/>
    </source>
</evidence>
<evidence type="ECO:0000255" key="2"/>
<evidence type="ECO:0000255" key="3">
    <source>
        <dbReference type="PROSITE-ProRule" id="PRU00802"/>
    </source>
</evidence>
<evidence type="ECO:0000269" key="4">
    <source>
    </source>
</evidence>
<evidence type="ECO:0000303" key="5">
    <source>
    </source>
</evidence>
<evidence type="ECO:0000303" key="6">
    <source ref="3"/>
</evidence>
<evidence type="ECO:0000305" key="7"/>
<name>SUN3_HUMAN</name>
<keyword id="KW-0025">Alternative splicing</keyword>
<keyword id="KW-0175">Coiled coil</keyword>
<keyword id="KW-0472">Membrane</keyword>
<keyword id="KW-0539">Nucleus</keyword>
<keyword id="KW-1267">Proteomics identification</keyword>
<keyword id="KW-1185">Reference proteome</keyword>
<keyword id="KW-0812">Transmembrane</keyword>
<keyword id="KW-1133">Transmembrane helix</keyword>
<organism>
    <name type="scientific">Homo sapiens</name>
    <name type="common">Human</name>
    <dbReference type="NCBI Taxonomy" id="9606"/>
    <lineage>
        <taxon>Eukaryota</taxon>
        <taxon>Metazoa</taxon>
        <taxon>Chordata</taxon>
        <taxon>Craniata</taxon>
        <taxon>Vertebrata</taxon>
        <taxon>Euteleostomi</taxon>
        <taxon>Mammalia</taxon>
        <taxon>Eutheria</taxon>
        <taxon>Euarchontoglires</taxon>
        <taxon>Primates</taxon>
        <taxon>Haplorrhini</taxon>
        <taxon>Catarrhini</taxon>
        <taxon>Hominidae</taxon>
        <taxon>Homo</taxon>
    </lineage>
</organism>
<sequence>MSGKTKARRAAMFFRRCSEDASGSASGNALLSEDENPDANGVTRSWKIILSTMLTLTFLLVGLLNHQWLKETDVPQKSRQLYAIIAEYGSRLYKYQARLRMPKEQLELLKKESQNLENNFRQILFLIEQIDVLKALLRDMKDGMDNNHNWNTHGDPVEDPDHTEEVSNLVNYVLKKLREDQVEMADYALKSAGASIIEAGTSESYKNNKAKLYWHGIGFLNHEMPPDIILQPDVYPGKCWAFPGSQGHTLIKLATKIIPTAVTMEHISEKVSPSGNISSAPKEFSVYGITKKCEGEEIFLGQFIYNKTGTTVQTFELQHAVSEYLLCVKLNIFSNWGHPKYTCLYRFRVHGTPGKHI</sequence>
<protein>
    <recommendedName>
        <fullName>SUN domain-containing protein 3</fullName>
    </recommendedName>
    <alternativeName>
        <fullName>Sad1/unc-84 domain-containing protein 1</fullName>
    </alternativeName>
</protein>
<reference key="1">
    <citation type="submission" date="2001-10" db="EMBL/GenBank/DDBJ databases">
        <authorList>
            <person name="Guo J.H."/>
            <person name="She X.Y."/>
            <person name="Dai F.Y."/>
            <person name="Yu L."/>
        </authorList>
    </citation>
    <scope>NUCLEOTIDE SEQUENCE [LARGE SCALE MRNA] (ISOFORM 1)</scope>
</reference>
<reference key="2">
    <citation type="journal article" date="2004" name="Nat. Genet.">
        <title>Complete sequencing and characterization of 21,243 full-length human cDNAs.</title>
        <authorList>
            <person name="Ota T."/>
            <person name="Suzuki Y."/>
            <person name="Nishikawa T."/>
            <person name="Otsuki T."/>
            <person name="Sugiyama T."/>
            <person name="Irie R."/>
            <person name="Wakamatsu A."/>
            <person name="Hayashi K."/>
            <person name="Sato H."/>
            <person name="Nagai K."/>
            <person name="Kimura K."/>
            <person name="Makita H."/>
            <person name="Sekine M."/>
            <person name="Obayashi M."/>
            <person name="Nishi T."/>
            <person name="Shibahara T."/>
            <person name="Tanaka T."/>
            <person name="Ishii S."/>
            <person name="Yamamoto J."/>
            <person name="Saito K."/>
            <person name="Kawai Y."/>
            <person name="Isono Y."/>
            <person name="Nakamura Y."/>
            <person name="Nagahari K."/>
            <person name="Murakami K."/>
            <person name="Yasuda T."/>
            <person name="Iwayanagi T."/>
            <person name="Wagatsuma M."/>
            <person name="Shiratori A."/>
            <person name="Sudo H."/>
            <person name="Hosoiri T."/>
            <person name="Kaku Y."/>
            <person name="Kodaira H."/>
            <person name="Kondo H."/>
            <person name="Sugawara M."/>
            <person name="Takahashi M."/>
            <person name="Kanda K."/>
            <person name="Yokoi T."/>
            <person name="Furuya T."/>
            <person name="Kikkawa E."/>
            <person name="Omura Y."/>
            <person name="Abe K."/>
            <person name="Kamihara K."/>
            <person name="Katsuta N."/>
            <person name="Sato K."/>
            <person name="Tanikawa M."/>
            <person name="Yamazaki M."/>
            <person name="Ninomiya K."/>
            <person name="Ishibashi T."/>
            <person name="Yamashita H."/>
            <person name="Murakawa K."/>
            <person name="Fujimori K."/>
            <person name="Tanai H."/>
            <person name="Kimata M."/>
            <person name="Watanabe M."/>
            <person name="Hiraoka S."/>
            <person name="Chiba Y."/>
            <person name="Ishida S."/>
            <person name="Ono Y."/>
            <person name="Takiguchi S."/>
            <person name="Watanabe S."/>
            <person name="Yosida M."/>
            <person name="Hotuta T."/>
            <person name="Kusano J."/>
            <person name="Kanehori K."/>
            <person name="Takahashi-Fujii A."/>
            <person name="Hara H."/>
            <person name="Tanase T.-O."/>
            <person name="Nomura Y."/>
            <person name="Togiya S."/>
            <person name="Komai F."/>
            <person name="Hara R."/>
            <person name="Takeuchi K."/>
            <person name="Arita M."/>
            <person name="Imose N."/>
            <person name="Musashino K."/>
            <person name="Yuuki H."/>
            <person name="Oshima A."/>
            <person name="Sasaki N."/>
            <person name="Aotsuka S."/>
            <person name="Yoshikawa Y."/>
            <person name="Matsunawa H."/>
            <person name="Ichihara T."/>
            <person name="Shiohata N."/>
            <person name="Sano S."/>
            <person name="Moriya S."/>
            <person name="Momiyama H."/>
            <person name="Satoh N."/>
            <person name="Takami S."/>
            <person name="Terashima Y."/>
            <person name="Suzuki O."/>
            <person name="Nakagawa S."/>
            <person name="Senoh A."/>
            <person name="Mizoguchi H."/>
            <person name="Goto Y."/>
            <person name="Shimizu F."/>
            <person name="Wakebe H."/>
            <person name="Hishigaki H."/>
            <person name="Watanabe T."/>
            <person name="Sugiyama A."/>
            <person name="Takemoto M."/>
            <person name="Kawakami B."/>
            <person name="Yamazaki M."/>
            <person name="Watanabe K."/>
            <person name="Kumagai A."/>
            <person name="Itakura S."/>
            <person name="Fukuzumi Y."/>
            <person name="Fujimori Y."/>
            <person name="Komiyama M."/>
            <person name="Tashiro H."/>
            <person name="Tanigami A."/>
            <person name="Fujiwara T."/>
            <person name="Ono T."/>
            <person name="Yamada K."/>
            <person name="Fujii Y."/>
            <person name="Ozaki K."/>
            <person name="Hirao M."/>
            <person name="Ohmori Y."/>
            <person name="Kawabata A."/>
            <person name="Hikiji T."/>
            <person name="Kobatake N."/>
            <person name="Inagaki H."/>
            <person name="Ikema Y."/>
            <person name="Okamoto S."/>
            <person name="Okitani R."/>
            <person name="Kawakami T."/>
            <person name="Noguchi S."/>
            <person name="Itoh T."/>
            <person name="Shigeta K."/>
            <person name="Senba T."/>
            <person name="Matsumura K."/>
            <person name="Nakajima Y."/>
            <person name="Mizuno T."/>
            <person name="Morinaga M."/>
            <person name="Sasaki M."/>
            <person name="Togashi T."/>
            <person name="Oyama M."/>
            <person name="Hata H."/>
            <person name="Watanabe M."/>
            <person name="Komatsu T."/>
            <person name="Mizushima-Sugano J."/>
            <person name="Satoh T."/>
            <person name="Shirai Y."/>
            <person name="Takahashi Y."/>
            <person name="Nakagawa K."/>
            <person name="Okumura K."/>
            <person name="Nagase T."/>
            <person name="Nomura N."/>
            <person name="Kikuchi H."/>
            <person name="Masuho Y."/>
            <person name="Yamashita R."/>
            <person name="Nakai K."/>
            <person name="Yada T."/>
            <person name="Nakamura Y."/>
            <person name="Ohara O."/>
            <person name="Isogai T."/>
            <person name="Sugano S."/>
        </authorList>
    </citation>
    <scope>NUCLEOTIDE SEQUENCE [LARGE SCALE MRNA] (ISOFORM 3)</scope>
    <source>
        <tissue>Testis</tissue>
    </source>
</reference>
<reference key="3">
    <citation type="submission" date="2005-06" db="EMBL/GenBank/DDBJ databases">
        <authorList>
            <person name="Li H."/>
            <person name="Nong W."/>
            <person name="Zhou G."/>
            <person name="Ke R."/>
            <person name="Shen C."/>
            <person name="Zhong G."/>
            <person name="Zheng Z."/>
            <person name="Liang M."/>
            <person name="Li M."/>
            <person name="Lin L."/>
            <person name="Yang S."/>
        </authorList>
    </citation>
    <scope>NUCLEOTIDE SEQUENCE [LARGE SCALE MRNA] (ISOFORM 2)</scope>
</reference>
<reference key="4">
    <citation type="journal article" date="2003" name="Nature">
        <title>The DNA sequence of human chromosome 7.</title>
        <authorList>
            <person name="Hillier L.W."/>
            <person name="Fulton R.S."/>
            <person name="Fulton L.A."/>
            <person name="Graves T.A."/>
            <person name="Pepin K.H."/>
            <person name="Wagner-McPherson C."/>
            <person name="Layman D."/>
            <person name="Maas J."/>
            <person name="Jaeger S."/>
            <person name="Walker R."/>
            <person name="Wylie K."/>
            <person name="Sekhon M."/>
            <person name="Becker M.C."/>
            <person name="O'Laughlin M.D."/>
            <person name="Schaller M.E."/>
            <person name="Fewell G.A."/>
            <person name="Delehaunty K.D."/>
            <person name="Miner T.L."/>
            <person name="Nash W.E."/>
            <person name="Cordes M."/>
            <person name="Du H."/>
            <person name="Sun H."/>
            <person name="Edwards J."/>
            <person name="Bradshaw-Cordum H."/>
            <person name="Ali J."/>
            <person name="Andrews S."/>
            <person name="Isak A."/>
            <person name="Vanbrunt A."/>
            <person name="Nguyen C."/>
            <person name="Du F."/>
            <person name="Lamar B."/>
            <person name="Courtney L."/>
            <person name="Kalicki J."/>
            <person name="Ozersky P."/>
            <person name="Bielicki L."/>
            <person name="Scott K."/>
            <person name="Holmes A."/>
            <person name="Harkins R."/>
            <person name="Harris A."/>
            <person name="Strong C.M."/>
            <person name="Hou S."/>
            <person name="Tomlinson C."/>
            <person name="Dauphin-Kohlberg S."/>
            <person name="Kozlowicz-Reilly A."/>
            <person name="Leonard S."/>
            <person name="Rohlfing T."/>
            <person name="Rock S.M."/>
            <person name="Tin-Wollam A.-M."/>
            <person name="Abbott A."/>
            <person name="Minx P."/>
            <person name="Maupin R."/>
            <person name="Strowmatt C."/>
            <person name="Latreille P."/>
            <person name="Miller N."/>
            <person name="Johnson D."/>
            <person name="Murray J."/>
            <person name="Woessner J.P."/>
            <person name="Wendl M.C."/>
            <person name="Yang S.-P."/>
            <person name="Schultz B.R."/>
            <person name="Wallis J.W."/>
            <person name="Spieth J."/>
            <person name="Bieri T.A."/>
            <person name="Nelson J.O."/>
            <person name="Berkowicz N."/>
            <person name="Wohldmann P.E."/>
            <person name="Cook L.L."/>
            <person name="Hickenbotham M.T."/>
            <person name="Eldred J."/>
            <person name="Williams D."/>
            <person name="Bedell J.A."/>
            <person name="Mardis E.R."/>
            <person name="Clifton S.W."/>
            <person name="Chissoe S.L."/>
            <person name="Marra M.A."/>
            <person name="Raymond C."/>
            <person name="Haugen E."/>
            <person name="Gillett W."/>
            <person name="Zhou Y."/>
            <person name="James R."/>
            <person name="Phelps K."/>
            <person name="Iadanoto S."/>
            <person name="Bubb K."/>
            <person name="Simms E."/>
            <person name="Levy R."/>
            <person name="Clendenning J."/>
            <person name="Kaul R."/>
            <person name="Kent W.J."/>
            <person name="Furey T.S."/>
            <person name="Baertsch R.A."/>
            <person name="Brent M.R."/>
            <person name="Keibler E."/>
            <person name="Flicek P."/>
            <person name="Bork P."/>
            <person name="Suyama M."/>
            <person name="Bailey J.A."/>
            <person name="Portnoy M.E."/>
            <person name="Torrents D."/>
            <person name="Chinwalla A.T."/>
            <person name="Gish W.R."/>
            <person name="Eddy S.R."/>
            <person name="McPherson J.D."/>
            <person name="Olson M.V."/>
            <person name="Eichler E.E."/>
            <person name="Green E.D."/>
            <person name="Waterston R.H."/>
            <person name="Wilson R.K."/>
        </authorList>
    </citation>
    <scope>NUCLEOTIDE SEQUENCE [LARGE SCALE GENOMIC DNA]</scope>
</reference>
<reference key="5">
    <citation type="submission" date="2005-09" db="EMBL/GenBank/DDBJ databases">
        <authorList>
            <person name="Mural R.J."/>
            <person name="Istrail S."/>
            <person name="Sutton G.G."/>
            <person name="Florea L."/>
            <person name="Halpern A.L."/>
            <person name="Mobarry C.M."/>
            <person name="Lippert R."/>
            <person name="Walenz B."/>
            <person name="Shatkay H."/>
            <person name="Dew I."/>
            <person name="Miller J.R."/>
            <person name="Flanigan M.J."/>
            <person name="Edwards N.J."/>
            <person name="Bolanos R."/>
            <person name="Fasulo D."/>
            <person name="Halldorsson B.V."/>
            <person name="Hannenhalli S."/>
            <person name="Turner R."/>
            <person name="Yooseph S."/>
            <person name="Lu F."/>
            <person name="Nusskern D.R."/>
            <person name="Shue B.C."/>
            <person name="Zheng X.H."/>
            <person name="Zhong F."/>
            <person name="Delcher A.L."/>
            <person name="Huson D.H."/>
            <person name="Kravitz S.A."/>
            <person name="Mouchard L."/>
            <person name="Reinert K."/>
            <person name="Remington K.A."/>
            <person name="Clark A.G."/>
            <person name="Waterman M.S."/>
            <person name="Eichler E.E."/>
            <person name="Adams M.D."/>
            <person name="Hunkapiller M.W."/>
            <person name="Myers E.W."/>
            <person name="Venter J.C."/>
        </authorList>
    </citation>
    <scope>NUCLEOTIDE SEQUENCE [LARGE SCALE GENOMIC DNA]</scope>
</reference>
<reference key="6">
    <citation type="journal article" date="2004" name="Genome Res.">
        <title>The status, quality, and expansion of the NIH full-length cDNA project: the Mammalian Gene Collection (MGC).</title>
        <authorList>
            <consortium name="The MGC Project Team"/>
        </authorList>
    </citation>
    <scope>NUCLEOTIDE SEQUENCE [LARGE SCALE MRNA] (ISOFORM 1)</scope>
    <scope>VARIANT VAL-127</scope>
    <source>
        <tissue>Brain</tissue>
    </source>
</reference>
<reference key="7">
    <citation type="journal article" date="2015" name="Biophys. J.">
        <title>A disulfide bond is required for the transmission of forces through SUN-KASH complexes.</title>
        <authorList>
            <person name="Jahed Z."/>
            <person name="Shams H."/>
            <person name="Mofrad M.R."/>
        </authorList>
    </citation>
    <scope>LACK OF DISULFIDE BOND</scope>
    <scope>DOMAIN</scope>
    <scope>FUNCTION</scope>
</reference>
<comment type="function">
    <text evidence="1">As a probable component of the LINC (LInker of Nucleoskeleton and Cytoskeleton) complex, involved in the connection between the nuclear lamina and the cytoskeleton. The nucleocytoplasmic interactions established by the LINC complex play an important role in the transmission of mechanical forces across the nuclear envelope and in nuclear movement and positioning. May be involved in nuclear remodeling during sperm head formation in spermatogenesis. A probable SUN3:SYNE1 LINC complex may tether spermatid nuclei to posterior cytoskeletal structures such as the manchette.</text>
</comment>
<comment type="subunit">
    <text evidence="1">Self-associates. Interacts with SYNE1 and SPAG4/SUN4. Proposed to form a spermatogenesis-specific LINC complex with SYNE1 during sperm head formation possibly implicating a SUN domain-based heterotrimer with SPAG4/SUN4 associating with SYNE1.</text>
</comment>
<comment type="subcellular location">
    <subcellularLocation>
        <location evidence="7">Membrane</location>
        <topology evidence="7">Single-pass membrane protein</topology>
    </subcellularLocation>
    <subcellularLocation>
        <location evidence="1">Nucleus envelope</location>
    </subcellularLocation>
    <subcellularLocation>
        <location evidence="7">Nucleus inner membrane</location>
    </subcellularLocation>
</comment>
<comment type="alternative products">
    <event type="alternative splicing"/>
    <isoform>
        <id>Q8TAQ9-1</id>
        <name>1</name>
        <sequence type="displayed"/>
    </isoform>
    <isoform>
        <id>Q8TAQ9-2</id>
        <name>2</name>
        <sequence type="described" ref="VSP_029748 VSP_029749"/>
    </isoform>
    <isoform>
        <id>Q8TAQ9-3</id>
        <name>3</name>
        <sequence type="described" ref="VSP_055624"/>
    </isoform>
</comment>
<comment type="domain">
    <text>The short coiled coil domain is proposed to be not involved in load-bearing and force transmission from the cytoskeleton but in mere nucleus anchorage instead.</text>
</comment>
<comment type="sequence caution" evidence="7">
    <conflict type="frameshift">
        <sequence resource="EMBL-CDS" id="AAP97300"/>
    </conflict>
</comment>
<comment type="sequence caution" evidence="7">
    <conflict type="erroneous gene model prediction">
        <sequence resource="EMBL-CDS" id="EAL23808"/>
    </conflict>
</comment>